<evidence type="ECO:0000305" key="1"/>
<keyword id="KW-0903">Direct protein sequencing</keyword>
<accession>P81886</accession>
<reference key="1">
    <citation type="journal article" date="2000" name="Vet. Microbiol.">
        <title>Serum antibody responses of cats to soluble whole cell antigens of feline Porphyromonas gingivalis.</title>
        <authorList>
            <person name="Norris J.M."/>
            <person name="Love D.N."/>
        </authorList>
    </citation>
    <scope>PROTEIN SEQUENCE</scope>
    <source>
        <strain>VPB 3492</strain>
    </source>
</reference>
<sequence length="8" mass="989">APYQKRNI</sequence>
<protein>
    <recommendedName>
        <fullName>44 kDa immunogenic protein</fullName>
    </recommendedName>
</protein>
<feature type="chain" id="PRO_0000064788" description="44 kDa immunogenic protein">
    <location>
        <begin position="1"/>
        <end position="8" status="greater than"/>
    </location>
</feature>
<feature type="non-terminal residue">
    <location>
        <position position="8"/>
    </location>
</feature>
<comment type="similarity">
    <text evidence="1">To P.gingivalis hemagglutinin A.</text>
</comment>
<organism>
    <name type="scientific">Porphyromonas gingivalis</name>
    <name type="common">Bacteroides gingivalis</name>
    <dbReference type="NCBI Taxonomy" id="837"/>
    <lineage>
        <taxon>Bacteria</taxon>
        <taxon>Pseudomonadati</taxon>
        <taxon>Bacteroidota</taxon>
        <taxon>Bacteroidia</taxon>
        <taxon>Bacteroidales</taxon>
        <taxon>Porphyromonadaceae</taxon>
        <taxon>Porphyromonas</taxon>
    </lineage>
</organism>
<name>B44K_PORGN</name>
<proteinExistence type="evidence at protein level"/>